<organism>
    <name type="scientific">Clostridium acetobutylicum (strain ATCC 824 / DSM 792 / JCM 1419 / IAM 19013 / LMG 5710 / NBRC 13948 / NRRL B-527 / VKM B-1787 / 2291 / W)</name>
    <dbReference type="NCBI Taxonomy" id="272562"/>
    <lineage>
        <taxon>Bacteria</taxon>
        <taxon>Bacillati</taxon>
        <taxon>Bacillota</taxon>
        <taxon>Clostridia</taxon>
        <taxon>Eubacteriales</taxon>
        <taxon>Clostridiaceae</taxon>
        <taxon>Clostridium</taxon>
    </lineage>
</organism>
<accession>Q97H98</accession>
<protein>
    <recommendedName>
        <fullName evidence="1">Lipoprotein signal peptidase</fullName>
        <ecNumber evidence="1">3.4.23.36</ecNumber>
    </recommendedName>
    <alternativeName>
        <fullName evidence="1">Prolipoprotein signal peptidase</fullName>
    </alternativeName>
    <alternativeName>
        <fullName evidence="1">Signal peptidase II</fullName>
        <shortName evidence="1">SPase II</shortName>
    </alternativeName>
</protein>
<dbReference type="EC" id="3.4.23.36" evidence="1"/>
<dbReference type="EMBL" id="AE001437">
    <property type="protein sequence ID" value="AAK80073.1"/>
    <property type="molecule type" value="Genomic_DNA"/>
</dbReference>
<dbReference type="PIR" id="F97160">
    <property type="entry name" value="F97160"/>
</dbReference>
<dbReference type="RefSeq" id="NP_348733.1">
    <property type="nucleotide sequence ID" value="NC_003030.1"/>
</dbReference>
<dbReference type="RefSeq" id="WP_010965414.1">
    <property type="nucleotide sequence ID" value="NC_003030.1"/>
</dbReference>
<dbReference type="SMR" id="Q97H98"/>
<dbReference type="STRING" id="272562.CA_C2115"/>
<dbReference type="GeneID" id="44998596"/>
<dbReference type="KEGG" id="cac:CA_C2115"/>
<dbReference type="PATRIC" id="fig|272562.8.peg.2317"/>
<dbReference type="eggNOG" id="COG0597">
    <property type="taxonomic scope" value="Bacteria"/>
</dbReference>
<dbReference type="HOGENOM" id="CLU_083252_3_4_9"/>
<dbReference type="OrthoDB" id="9810259at2"/>
<dbReference type="UniPathway" id="UPA00665"/>
<dbReference type="Proteomes" id="UP000000814">
    <property type="component" value="Chromosome"/>
</dbReference>
<dbReference type="GO" id="GO:0005886">
    <property type="term" value="C:plasma membrane"/>
    <property type="evidence" value="ECO:0007669"/>
    <property type="project" value="UniProtKB-SubCell"/>
</dbReference>
<dbReference type="GO" id="GO:0004190">
    <property type="term" value="F:aspartic-type endopeptidase activity"/>
    <property type="evidence" value="ECO:0007669"/>
    <property type="project" value="UniProtKB-UniRule"/>
</dbReference>
<dbReference type="GO" id="GO:0006508">
    <property type="term" value="P:proteolysis"/>
    <property type="evidence" value="ECO:0007669"/>
    <property type="project" value="UniProtKB-KW"/>
</dbReference>
<dbReference type="HAMAP" id="MF_00161">
    <property type="entry name" value="LspA"/>
    <property type="match status" value="1"/>
</dbReference>
<dbReference type="InterPro" id="IPR001872">
    <property type="entry name" value="Peptidase_A8"/>
</dbReference>
<dbReference type="NCBIfam" id="TIGR00077">
    <property type="entry name" value="lspA"/>
    <property type="match status" value="1"/>
</dbReference>
<dbReference type="PANTHER" id="PTHR33695">
    <property type="entry name" value="LIPOPROTEIN SIGNAL PEPTIDASE"/>
    <property type="match status" value="1"/>
</dbReference>
<dbReference type="PANTHER" id="PTHR33695:SF1">
    <property type="entry name" value="LIPOPROTEIN SIGNAL PEPTIDASE"/>
    <property type="match status" value="1"/>
</dbReference>
<dbReference type="Pfam" id="PF01252">
    <property type="entry name" value="Peptidase_A8"/>
    <property type="match status" value="1"/>
</dbReference>
<dbReference type="PRINTS" id="PR00781">
    <property type="entry name" value="LIPOSIGPTASE"/>
</dbReference>
<dbReference type="PROSITE" id="PS00855">
    <property type="entry name" value="SPASE_II"/>
    <property type="match status" value="1"/>
</dbReference>
<proteinExistence type="inferred from homology"/>
<evidence type="ECO:0000255" key="1">
    <source>
        <dbReference type="HAMAP-Rule" id="MF_00161"/>
    </source>
</evidence>
<feature type="chain" id="PRO_0000289367" description="Lipoprotein signal peptidase">
    <location>
        <begin position="1"/>
        <end position="154"/>
    </location>
</feature>
<feature type="transmembrane region" description="Helical" evidence="1">
    <location>
        <begin position="57"/>
        <end position="77"/>
    </location>
</feature>
<feature type="transmembrane region" description="Helical" evidence="1">
    <location>
        <begin position="86"/>
        <end position="103"/>
    </location>
</feature>
<feature type="transmembrane region" description="Helical" evidence="1">
    <location>
        <begin position="124"/>
        <end position="144"/>
    </location>
</feature>
<feature type="active site" evidence="1">
    <location>
        <position position="110"/>
    </location>
</feature>
<feature type="active site" evidence="1">
    <location>
        <position position="129"/>
    </location>
</feature>
<reference key="1">
    <citation type="journal article" date="2001" name="J. Bacteriol.">
        <title>Genome sequence and comparative analysis of the solvent-producing bacterium Clostridium acetobutylicum.</title>
        <authorList>
            <person name="Noelling J."/>
            <person name="Breton G."/>
            <person name="Omelchenko M.V."/>
            <person name="Makarova K.S."/>
            <person name="Zeng Q."/>
            <person name="Gibson R."/>
            <person name="Lee H.M."/>
            <person name="Dubois J."/>
            <person name="Qiu D."/>
            <person name="Hitti J."/>
            <person name="Wolf Y.I."/>
            <person name="Tatusov R.L."/>
            <person name="Sabathe F."/>
            <person name="Doucette-Stamm L.A."/>
            <person name="Soucaille P."/>
            <person name="Daly M.J."/>
            <person name="Bennett G.N."/>
            <person name="Koonin E.V."/>
            <person name="Smith D.R."/>
        </authorList>
    </citation>
    <scope>NUCLEOTIDE SEQUENCE [LARGE SCALE GENOMIC DNA]</scope>
    <source>
        <strain>ATCC 824 / DSM 792 / JCM 1419 / IAM 19013 / LMG 5710 / NBRC 13948 / NRRL B-527 / VKM B-1787 / 2291 / W</strain>
    </source>
</reference>
<gene>
    <name evidence="1" type="primary">lspA</name>
    <name type="ordered locus">CA_C2115</name>
</gene>
<keyword id="KW-0064">Aspartyl protease</keyword>
<keyword id="KW-1003">Cell membrane</keyword>
<keyword id="KW-0378">Hydrolase</keyword>
<keyword id="KW-0472">Membrane</keyword>
<keyword id="KW-0645">Protease</keyword>
<keyword id="KW-1185">Reference proteome</keyword>
<keyword id="KW-0812">Transmembrane</keyword>
<keyword id="KW-1133">Transmembrane helix</keyword>
<comment type="function">
    <text evidence="1">This protein specifically catalyzes the removal of signal peptides from prolipoproteins.</text>
</comment>
<comment type="catalytic activity">
    <reaction evidence="1">
        <text>Release of signal peptides from bacterial membrane prolipoproteins. Hydrolyzes -Xaa-Yaa-Zaa-|-(S,diacylglyceryl)Cys-, in which Xaa is hydrophobic (preferably Leu), and Yaa (Ala or Ser) and Zaa (Gly or Ala) have small, neutral side chains.</text>
        <dbReference type="EC" id="3.4.23.36"/>
    </reaction>
</comment>
<comment type="pathway">
    <text evidence="1">Protein modification; lipoprotein biosynthesis (signal peptide cleavage).</text>
</comment>
<comment type="subcellular location">
    <subcellularLocation>
        <location evidence="1">Cell membrane</location>
        <topology evidence="1">Multi-pass membrane protein</topology>
    </subcellularLocation>
</comment>
<comment type="similarity">
    <text evidence="1">Belongs to the peptidase A8 family.</text>
</comment>
<sequence length="154" mass="17428">MEILVVAVGILVDRLTKIWALDKLKKVQDIPIIKNFFDLTYVENRGAAWGIFSGKTLVLSAVTLLVLSAIIVYMIKYRPKSKLARISLSLVISGALGNLYDRVFYKYVVDLFSLHYKDIYYYPVFNVADICVVVGTIMIAIFIVLKDDKKDGKV</sequence>
<name>LSPA_CLOAB</name>